<name>YIDH_ECO57</name>
<gene>
    <name type="primary">yidH</name>
    <name type="ordered locus">Z5171</name>
    <name type="ordered locus">ECs4617</name>
</gene>
<protein>
    <recommendedName>
        <fullName>Inner membrane protein YidH</fullName>
    </recommendedName>
</protein>
<feature type="chain" id="PRO_0000169629" description="Inner membrane protein YidH">
    <location>
        <begin position="1"/>
        <end position="115"/>
    </location>
</feature>
<feature type="topological domain" description="Cytoplasmic" evidence="2">
    <location>
        <begin position="1"/>
        <end position="30"/>
    </location>
</feature>
<feature type="transmembrane region" description="Helical" evidence="2">
    <location>
        <begin position="31"/>
        <end position="51"/>
    </location>
</feature>
<feature type="topological domain" description="Periplasmic" evidence="2">
    <location>
        <begin position="52"/>
        <end position="53"/>
    </location>
</feature>
<feature type="transmembrane region" description="Helical" evidence="2">
    <location>
        <begin position="54"/>
        <end position="74"/>
    </location>
</feature>
<feature type="topological domain" description="Cytoplasmic" evidence="2">
    <location>
        <begin position="75"/>
        <end position="92"/>
    </location>
</feature>
<feature type="transmembrane region" description="Helical" evidence="2">
    <location>
        <begin position="93"/>
        <end position="113"/>
    </location>
</feature>
<feature type="topological domain" description="Periplasmic" evidence="2">
    <location>
        <begin position="114"/>
        <end position="115"/>
    </location>
</feature>
<organism>
    <name type="scientific">Escherichia coli O157:H7</name>
    <dbReference type="NCBI Taxonomy" id="83334"/>
    <lineage>
        <taxon>Bacteria</taxon>
        <taxon>Pseudomonadati</taxon>
        <taxon>Pseudomonadota</taxon>
        <taxon>Gammaproteobacteria</taxon>
        <taxon>Enterobacterales</taxon>
        <taxon>Enterobacteriaceae</taxon>
        <taxon>Escherichia</taxon>
    </lineage>
</organism>
<reference key="1">
    <citation type="journal article" date="2001" name="Nature">
        <title>Genome sequence of enterohaemorrhagic Escherichia coli O157:H7.</title>
        <authorList>
            <person name="Perna N.T."/>
            <person name="Plunkett G. III"/>
            <person name="Burland V."/>
            <person name="Mau B."/>
            <person name="Glasner J.D."/>
            <person name="Rose D.J."/>
            <person name="Mayhew G.F."/>
            <person name="Evans P.S."/>
            <person name="Gregor J."/>
            <person name="Kirkpatrick H.A."/>
            <person name="Posfai G."/>
            <person name="Hackett J."/>
            <person name="Klink S."/>
            <person name="Boutin A."/>
            <person name="Shao Y."/>
            <person name="Miller L."/>
            <person name="Grotbeck E.J."/>
            <person name="Davis N.W."/>
            <person name="Lim A."/>
            <person name="Dimalanta E.T."/>
            <person name="Potamousis K."/>
            <person name="Apodaca J."/>
            <person name="Anantharaman T.S."/>
            <person name="Lin J."/>
            <person name="Yen G."/>
            <person name="Schwartz D.C."/>
            <person name="Welch R.A."/>
            <person name="Blattner F.R."/>
        </authorList>
    </citation>
    <scope>NUCLEOTIDE SEQUENCE [LARGE SCALE GENOMIC DNA]</scope>
    <source>
        <strain>O157:H7 / EDL933 / ATCC 700927 / EHEC</strain>
    </source>
</reference>
<reference key="2">
    <citation type="journal article" date="2001" name="DNA Res.">
        <title>Complete genome sequence of enterohemorrhagic Escherichia coli O157:H7 and genomic comparison with a laboratory strain K-12.</title>
        <authorList>
            <person name="Hayashi T."/>
            <person name="Makino K."/>
            <person name="Ohnishi M."/>
            <person name="Kurokawa K."/>
            <person name="Ishii K."/>
            <person name="Yokoyama K."/>
            <person name="Han C.-G."/>
            <person name="Ohtsubo E."/>
            <person name="Nakayama K."/>
            <person name="Murata T."/>
            <person name="Tanaka M."/>
            <person name="Tobe T."/>
            <person name="Iida T."/>
            <person name="Takami H."/>
            <person name="Honda T."/>
            <person name="Sasakawa C."/>
            <person name="Ogasawara N."/>
            <person name="Yasunaga T."/>
            <person name="Kuhara S."/>
            <person name="Shiba T."/>
            <person name="Hattori M."/>
            <person name="Shinagawa H."/>
        </authorList>
    </citation>
    <scope>NUCLEOTIDE SEQUENCE [LARGE SCALE GENOMIC DNA]</scope>
    <source>
        <strain>O157:H7 / Sakai / RIMD 0509952 / EHEC</strain>
    </source>
</reference>
<comment type="subcellular location">
    <subcellularLocation>
        <location evidence="1">Cell inner membrane</location>
        <topology evidence="1">Multi-pass membrane protein</topology>
    </subcellularLocation>
</comment>
<comment type="similarity">
    <text evidence="3">To M.tuberculosis Rv2272.</text>
</comment>
<evidence type="ECO:0000250" key="1"/>
<evidence type="ECO:0000255" key="2"/>
<evidence type="ECO:0000305" key="3"/>
<keyword id="KW-0997">Cell inner membrane</keyword>
<keyword id="KW-1003">Cell membrane</keyword>
<keyword id="KW-0472">Membrane</keyword>
<keyword id="KW-1185">Reference proteome</keyword>
<keyword id="KW-0812">Transmembrane</keyword>
<keyword id="KW-1133">Transmembrane helix</keyword>
<proteinExistence type="inferred from homology"/>
<dbReference type="EMBL" id="AE005174">
    <property type="protein sequence ID" value="AAG58879.1"/>
    <property type="molecule type" value="Genomic_DNA"/>
</dbReference>
<dbReference type="EMBL" id="BA000007">
    <property type="protein sequence ID" value="BAB38040.1"/>
    <property type="molecule type" value="Genomic_DNA"/>
</dbReference>
<dbReference type="PIR" id="A98206">
    <property type="entry name" value="A98206"/>
</dbReference>
<dbReference type="PIR" id="C86052">
    <property type="entry name" value="C86052"/>
</dbReference>
<dbReference type="RefSeq" id="NP_312644.1">
    <property type="nucleotide sequence ID" value="NC_002695.1"/>
</dbReference>
<dbReference type="RefSeq" id="WP_000703959.1">
    <property type="nucleotide sequence ID" value="NZ_VOAI01000011.1"/>
</dbReference>
<dbReference type="SMR" id="P0ADM2"/>
<dbReference type="STRING" id="155864.Z5171"/>
<dbReference type="GeneID" id="915417"/>
<dbReference type="KEGG" id="ece:Z5171"/>
<dbReference type="KEGG" id="ecs:ECs_4617"/>
<dbReference type="PATRIC" id="fig|386585.9.peg.4823"/>
<dbReference type="eggNOG" id="COG2149">
    <property type="taxonomic scope" value="Bacteria"/>
</dbReference>
<dbReference type="HOGENOM" id="CLU_053359_4_1_6"/>
<dbReference type="OMA" id="NHWVRCE"/>
<dbReference type="Proteomes" id="UP000000558">
    <property type="component" value="Chromosome"/>
</dbReference>
<dbReference type="Proteomes" id="UP000002519">
    <property type="component" value="Chromosome"/>
</dbReference>
<dbReference type="GO" id="GO:0005886">
    <property type="term" value="C:plasma membrane"/>
    <property type="evidence" value="ECO:0007669"/>
    <property type="project" value="UniProtKB-SubCell"/>
</dbReference>
<dbReference type="InterPro" id="IPR003807">
    <property type="entry name" value="DUF202"/>
</dbReference>
<dbReference type="InterPro" id="IPR052053">
    <property type="entry name" value="IM_YidH-like"/>
</dbReference>
<dbReference type="PANTHER" id="PTHR34187:SF2">
    <property type="entry name" value="DUF202 DOMAIN-CONTAINING PROTEIN"/>
    <property type="match status" value="1"/>
</dbReference>
<dbReference type="PANTHER" id="PTHR34187">
    <property type="entry name" value="FGR18P"/>
    <property type="match status" value="1"/>
</dbReference>
<dbReference type="Pfam" id="PF02656">
    <property type="entry name" value="DUF202"/>
    <property type="match status" value="1"/>
</dbReference>
<sequence>MKISRLGEAPDYRFSLANERTFLAWIRTALGFLAAGVGLDQLAPDFATPVIRELLALLLCLFSGGLAMYGYLRWLRNEKAMRLKEDLPYTNSLLIISLILMVVAVIVMGLVLYAG</sequence>
<accession>P0ADM2</accession>
<accession>P31445</accession>